<reference key="1">
    <citation type="journal article" date="2002" name="Proc. Natl. Acad. Sci. U.S.A.">
        <title>The genome sequence of the facultative intracellular pathogen Brucella melitensis.</title>
        <authorList>
            <person name="DelVecchio V.G."/>
            <person name="Kapatral V."/>
            <person name="Redkar R.J."/>
            <person name="Patra G."/>
            <person name="Mujer C."/>
            <person name="Los T."/>
            <person name="Ivanova N."/>
            <person name="Anderson I."/>
            <person name="Bhattacharyya A."/>
            <person name="Lykidis A."/>
            <person name="Reznik G."/>
            <person name="Jablonski L."/>
            <person name="Larsen N."/>
            <person name="D'Souza M."/>
            <person name="Bernal A."/>
            <person name="Mazur M."/>
            <person name="Goltsman E."/>
            <person name="Selkov E."/>
            <person name="Elzer P.H."/>
            <person name="Hagius S."/>
            <person name="O'Callaghan D."/>
            <person name="Letesson J.-J."/>
            <person name="Haselkorn R."/>
            <person name="Kyrpides N.C."/>
            <person name="Overbeek R."/>
        </authorList>
    </citation>
    <scope>NUCLEOTIDE SEQUENCE [LARGE SCALE GENOMIC DNA]</scope>
    <source>
        <strain>ATCC 23456 / CCUG 17765 / NCTC 10094 / 16M</strain>
    </source>
</reference>
<gene>
    <name evidence="1" type="primary">greA</name>
    <name type="ordered locus">BMEI0508</name>
</gene>
<keyword id="KW-0238">DNA-binding</keyword>
<keyword id="KW-0804">Transcription</keyword>
<keyword id="KW-0805">Transcription regulation</keyword>
<evidence type="ECO:0000255" key="1">
    <source>
        <dbReference type="HAMAP-Rule" id="MF_00105"/>
    </source>
</evidence>
<sequence length="157" mass="17529">MEKFPMTPRGFEKLKEELRWRQQSERPRIIEAIAEARAHGDLSENAEYHAAKEAQSLNEGRINELEDLVARAEVIDVSKLTGDRIKFGATVTMIDEDTEEEKIYQIVGDQEADVKEGRISISSPIARALIGKGEGDTIEVNAPGGSRSYEIIALKFV</sequence>
<proteinExistence type="inferred from homology"/>
<feature type="chain" id="PRO_0000176910" description="Transcription elongation factor GreA">
    <location>
        <begin position="1"/>
        <end position="157"/>
    </location>
</feature>
<name>GREA_BRUME</name>
<protein>
    <recommendedName>
        <fullName evidence="1">Transcription elongation factor GreA</fullName>
    </recommendedName>
    <alternativeName>
        <fullName evidence="1">Transcript cleavage factor GreA</fullName>
    </alternativeName>
</protein>
<organism>
    <name type="scientific">Brucella melitensis biotype 1 (strain ATCC 23456 / CCUG 17765 / NCTC 10094 / 16M)</name>
    <dbReference type="NCBI Taxonomy" id="224914"/>
    <lineage>
        <taxon>Bacteria</taxon>
        <taxon>Pseudomonadati</taxon>
        <taxon>Pseudomonadota</taxon>
        <taxon>Alphaproteobacteria</taxon>
        <taxon>Hyphomicrobiales</taxon>
        <taxon>Brucellaceae</taxon>
        <taxon>Brucella/Ochrobactrum group</taxon>
        <taxon>Brucella</taxon>
    </lineage>
</organism>
<accession>P64271</accession>
<accession>Q8YID6</accession>
<dbReference type="EMBL" id="AE008917">
    <property type="protein sequence ID" value="AAL51689.1"/>
    <property type="molecule type" value="Genomic_DNA"/>
</dbReference>
<dbReference type="PIR" id="AF3315">
    <property type="entry name" value="AF3315"/>
</dbReference>
<dbReference type="RefSeq" id="WP_002964610.1">
    <property type="nucleotide sequence ID" value="NZ_GG703780.1"/>
</dbReference>
<dbReference type="SMR" id="P64271"/>
<dbReference type="GeneID" id="93016210"/>
<dbReference type="KEGG" id="bme:BMEI0508"/>
<dbReference type="KEGG" id="bmel:DK63_915"/>
<dbReference type="PATRIC" id="fig|224914.52.peg.962"/>
<dbReference type="eggNOG" id="COG0782">
    <property type="taxonomic scope" value="Bacteria"/>
</dbReference>
<dbReference type="Proteomes" id="UP000000419">
    <property type="component" value="Chromosome I"/>
</dbReference>
<dbReference type="GO" id="GO:0003677">
    <property type="term" value="F:DNA binding"/>
    <property type="evidence" value="ECO:0007669"/>
    <property type="project" value="UniProtKB-UniRule"/>
</dbReference>
<dbReference type="GO" id="GO:0070063">
    <property type="term" value="F:RNA polymerase binding"/>
    <property type="evidence" value="ECO:0007669"/>
    <property type="project" value="InterPro"/>
</dbReference>
<dbReference type="GO" id="GO:0006354">
    <property type="term" value="P:DNA-templated transcription elongation"/>
    <property type="evidence" value="ECO:0007669"/>
    <property type="project" value="TreeGrafter"/>
</dbReference>
<dbReference type="GO" id="GO:0032784">
    <property type="term" value="P:regulation of DNA-templated transcription elongation"/>
    <property type="evidence" value="ECO:0007669"/>
    <property type="project" value="UniProtKB-UniRule"/>
</dbReference>
<dbReference type="FunFam" id="1.10.287.180:FF:000001">
    <property type="entry name" value="Transcription elongation factor GreA"/>
    <property type="match status" value="1"/>
</dbReference>
<dbReference type="FunFam" id="3.10.50.30:FF:000001">
    <property type="entry name" value="Transcription elongation factor GreA"/>
    <property type="match status" value="1"/>
</dbReference>
<dbReference type="Gene3D" id="3.10.50.30">
    <property type="entry name" value="Transcription elongation factor, GreA/GreB, C-terminal domain"/>
    <property type="match status" value="1"/>
</dbReference>
<dbReference type="Gene3D" id="1.10.287.180">
    <property type="entry name" value="Transcription elongation factor, GreA/GreB, N-terminal domain"/>
    <property type="match status" value="1"/>
</dbReference>
<dbReference type="HAMAP" id="MF_00105">
    <property type="entry name" value="GreA_GreB"/>
    <property type="match status" value="1"/>
</dbReference>
<dbReference type="InterPro" id="IPR036953">
    <property type="entry name" value="GreA/GreB_C_sf"/>
</dbReference>
<dbReference type="InterPro" id="IPR018151">
    <property type="entry name" value="TF_GreA/GreB_CS"/>
</dbReference>
<dbReference type="InterPro" id="IPR006359">
    <property type="entry name" value="Tscrpt_elong_fac_GreA"/>
</dbReference>
<dbReference type="InterPro" id="IPR028624">
    <property type="entry name" value="Tscrpt_elong_fac_GreA/B"/>
</dbReference>
<dbReference type="InterPro" id="IPR001437">
    <property type="entry name" value="Tscrpt_elong_fac_GreA/B_C"/>
</dbReference>
<dbReference type="InterPro" id="IPR023459">
    <property type="entry name" value="Tscrpt_elong_fac_GreA/B_fam"/>
</dbReference>
<dbReference type="InterPro" id="IPR022691">
    <property type="entry name" value="Tscrpt_elong_fac_GreA/B_N"/>
</dbReference>
<dbReference type="InterPro" id="IPR036805">
    <property type="entry name" value="Tscrpt_elong_fac_GreA/B_N_sf"/>
</dbReference>
<dbReference type="NCBIfam" id="TIGR01462">
    <property type="entry name" value="greA"/>
    <property type="match status" value="1"/>
</dbReference>
<dbReference type="NCBIfam" id="NF001261">
    <property type="entry name" value="PRK00226.1-2"/>
    <property type="match status" value="1"/>
</dbReference>
<dbReference type="NCBIfam" id="NF001263">
    <property type="entry name" value="PRK00226.1-4"/>
    <property type="match status" value="1"/>
</dbReference>
<dbReference type="NCBIfam" id="NF001264">
    <property type="entry name" value="PRK00226.1-5"/>
    <property type="match status" value="1"/>
</dbReference>
<dbReference type="PANTHER" id="PTHR30437">
    <property type="entry name" value="TRANSCRIPTION ELONGATION FACTOR GREA"/>
    <property type="match status" value="1"/>
</dbReference>
<dbReference type="PANTHER" id="PTHR30437:SF4">
    <property type="entry name" value="TRANSCRIPTION ELONGATION FACTOR GREA"/>
    <property type="match status" value="1"/>
</dbReference>
<dbReference type="Pfam" id="PF01272">
    <property type="entry name" value="GreA_GreB"/>
    <property type="match status" value="1"/>
</dbReference>
<dbReference type="Pfam" id="PF03449">
    <property type="entry name" value="GreA_GreB_N"/>
    <property type="match status" value="1"/>
</dbReference>
<dbReference type="PIRSF" id="PIRSF006092">
    <property type="entry name" value="GreA_GreB"/>
    <property type="match status" value="1"/>
</dbReference>
<dbReference type="SUPFAM" id="SSF54534">
    <property type="entry name" value="FKBP-like"/>
    <property type="match status" value="1"/>
</dbReference>
<dbReference type="SUPFAM" id="SSF46557">
    <property type="entry name" value="GreA transcript cleavage protein, N-terminal domain"/>
    <property type="match status" value="1"/>
</dbReference>
<dbReference type="PROSITE" id="PS00829">
    <property type="entry name" value="GREAB_1"/>
    <property type="match status" value="1"/>
</dbReference>
<dbReference type="PROSITE" id="PS00830">
    <property type="entry name" value="GREAB_2"/>
    <property type="match status" value="1"/>
</dbReference>
<comment type="function">
    <text evidence="1">Necessary for efficient RNA polymerase transcription elongation past template-encoded arresting sites. The arresting sites in DNA have the property of trapping a certain fraction of elongating RNA polymerases that pass through, resulting in locked ternary complexes. Cleavage of the nascent transcript by cleavage factors such as GreA or GreB allows the resumption of elongation from the new 3'terminus. GreA releases sequences of 2 to 3 nucleotides.</text>
</comment>
<comment type="similarity">
    <text evidence="1">Belongs to the GreA/GreB family.</text>
</comment>